<name>CPXT1_MICAN</name>
<accession>B0JQ95</accession>
<sequence>MTHPTDIKTLARWMAADFSNQEQAFANPPFFAHIRVCMRPLPDELLNGTSLFLEQAYDFMLNTPYRLRVFKLSLVDDHIELENFKVKEEANFFGASREPQRLKNLTLDLLEPMLGCDMNVTWTGNSFKGVVKPGKQCLVFRKDRMTYLDNSFEISERGLISVDRGLDPETDQLVWGSIAGPFEFVRRTSFAEEV</sequence>
<organism>
    <name type="scientific">Microcystis aeruginosa (strain NIES-843 / IAM M-2473)</name>
    <dbReference type="NCBI Taxonomy" id="449447"/>
    <lineage>
        <taxon>Bacteria</taxon>
        <taxon>Bacillati</taxon>
        <taxon>Cyanobacteriota</taxon>
        <taxon>Cyanophyceae</taxon>
        <taxon>Oscillatoriophycideae</taxon>
        <taxon>Chroococcales</taxon>
        <taxon>Microcystaceae</taxon>
        <taxon>Microcystis</taxon>
    </lineage>
</organism>
<dbReference type="EC" id="4.-.-.-" evidence="1"/>
<dbReference type="EMBL" id="AP009552">
    <property type="protein sequence ID" value="BAG00554.1"/>
    <property type="molecule type" value="Genomic_DNA"/>
</dbReference>
<dbReference type="RefSeq" id="WP_012264301.1">
    <property type="nucleotide sequence ID" value="NC_010296.1"/>
</dbReference>
<dbReference type="SMR" id="B0JQ95"/>
<dbReference type="STRING" id="449447.MAE_07320"/>
<dbReference type="PaxDb" id="449447-MAE_07320"/>
<dbReference type="EnsemblBacteria" id="BAG00554">
    <property type="protein sequence ID" value="BAG00554"/>
    <property type="gene ID" value="MAE_07320"/>
</dbReference>
<dbReference type="KEGG" id="mar:MAE_07320"/>
<dbReference type="PATRIC" id="fig|449447.4.peg.675"/>
<dbReference type="eggNOG" id="ENOG502Z877">
    <property type="taxonomic scope" value="Bacteria"/>
</dbReference>
<dbReference type="HOGENOM" id="CLU_092589_0_0_3"/>
<dbReference type="BioCyc" id="MAER449447:MAE_RS03260-MONOMER"/>
<dbReference type="Proteomes" id="UP000001510">
    <property type="component" value="Chromosome"/>
</dbReference>
<dbReference type="GO" id="GO:0016829">
    <property type="term" value="F:lyase activity"/>
    <property type="evidence" value="ECO:0007669"/>
    <property type="project" value="UniProtKB-KW"/>
</dbReference>
<dbReference type="CDD" id="cd16338">
    <property type="entry name" value="CpcT"/>
    <property type="match status" value="1"/>
</dbReference>
<dbReference type="Gene3D" id="2.40.128.590">
    <property type="entry name" value="CpcT/CpeT domain"/>
    <property type="match status" value="1"/>
</dbReference>
<dbReference type="HAMAP" id="MF_01460">
    <property type="entry name" value="Chrphore_lyase_CpxT"/>
    <property type="match status" value="1"/>
</dbReference>
<dbReference type="InterPro" id="IPR010404">
    <property type="entry name" value="CpcT/CpeT"/>
</dbReference>
<dbReference type="InterPro" id="IPR038672">
    <property type="entry name" value="CpcT/CpeT_sf"/>
</dbReference>
<dbReference type="PANTHER" id="PTHR35137">
    <property type="entry name" value="CHROMOPHORE LYASE CRL, CHLOROPLASTIC"/>
    <property type="match status" value="1"/>
</dbReference>
<dbReference type="PANTHER" id="PTHR35137:SF1">
    <property type="entry name" value="CHROMOPHORE LYASE CRL, CHLOROPLASTIC"/>
    <property type="match status" value="1"/>
</dbReference>
<dbReference type="Pfam" id="PF06206">
    <property type="entry name" value="CpeT"/>
    <property type="match status" value="1"/>
</dbReference>
<protein>
    <recommendedName>
        <fullName evidence="1">Chromophore lyase CpcT/CpeT 1</fullName>
        <ecNumber evidence="1">4.-.-.-</ecNumber>
    </recommendedName>
</protein>
<comment type="function">
    <text evidence="1">Covalently attaches a chromophore to Cys residue(s) of phycobiliproteins.</text>
</comment>
<comment type="similarity">
    <text evidence="1">Belongs to the CpcT/CpeT biliprotein lyase family.</text>
</comment>
<keyword id="KW-0456">Lyase</keyword>
<evidence type="ECO:0000255" key="1">
    <source>
        <dbReference type="HAMAP-Rule" id="MF_01460"/>
    </source>
</evidence>
<reference key="1">
    <citation type="journal article" date="2007" name="DNA Res.">
        <title>Complete genomic structure of the bloom-forming toxic cyanobacterium Microcystis aeruginosa NIES-843.</title>
        <authorList>
            <person name="Kaneko T."/>
            <person name="Nakajima N."/>
            <person name="Okamoto S."/>
            <person name="Suzuki I."/>
            <person name="Tanabe Y."/>
            <person name="Tamaoki M."/>
            <person name="Nakamura Y."/>
            <person name="Kasai F."/>
            <person name="Watanabe A."/>
            <person name="Kawashima K."/>
            <person name="Kishida Y."/>
            <person name="Ono A."/>
            <person name="Shimizu Y."/>
            <person name="Takahashi C."/>
            <person name="Minami C."/>
            <person name="Fujishiro T."/>
            <person name="Kohara M."/>
            <person name="Katoh M."/>
            <person name="Nakazaki N."/>
            <person name="Nakayama S."/>
            <person name="Yamada M."/>
            <person name="Tabata S."/>
            <person name="Watanabe M.M."/>
        </authorList>
    </citation>
    <scope>NUCLEOTIDE SEQUENCE [LARGE SCALE GENOMIC DNA]</scope>
    <source>
        <strain>NIES-843 / IAM M-247</strain>
    </source>
</reference>
<gene>
    <name evidence="1" type="primary">cpcT1</name>
    <name type="ordered locus">MAE_07320</name>
</gene>
<feature type="chain" id="PRO_0000403157" description="Chromophore lyase CpcT/CpeT 1">
    <location>
        <begin position="1"/>
        <end position="194"/>
    </location>
</feature>
<proteinExistence type="inferred from homology"/>